<feature type="chain" id="PRO_0000149224" description="Probable DNA polymerase sliding clamp">
    <location>
        <begin position="1"/>
        <end position="249"/>
    </location>
</feature>
<feature type="DNA-binding region" evidence="2">
    <location>
        <begin position="60"/>
        <end position="79"/>
    </location>
</feature>
<organism>
    <name type="scientific">Orgyia pseudotsugata multicapsid polyhedrosis virus</name>
    <name type="common">OpMNPV</name>
    <dbReference type="NCBI Taxonomy" id="262177"/>
    <lineage>
        <taxon>Viruses</taxon>
        <taxon>Viruses incertae sedis</taxon>
        <taxon>Naldaviricetes</taxon>
        <taxon>Lefavirales</taxon>
        <taxon>Baculoviridae</taxon>
        <taxon>Alphabaculovirus</taxon>
        <taxon>Alphabaculovirus orpseudotsugatae</taxon>
    </lineage>
</organism>
<dbReference type="EMBL" id="U75930">
    <property type="protein sequence ID" value="AAC59052.1"/>
    <property type="molecule type" value="Genomic_DNA"/>
</dbReference>
<dbReference type="RefSeq" id="NP_046209.1">
    <property type="nucleotide sequence ID" value="NC_001875.2"/>
</dbReference>
<dbReference type="SMR" id="O10308"/>
<dbReference type="KEGG" id="vg:912112"/>
<dbReference type="OrthoDB" id="8431at10239"/>
<dbReference type="Proteomes" id="UP000009248">
    <property type="component" value="Genome"/>
</dbReference>
<dbReference type="GO" id="GO:0003677">
    <property type="term" value="F:DNA binding"/>
    <property type="evidence" value="ECO:0007669"/>
    <property type="project" value="UniProtKB-KW"/>
</dbReference>
<dbReference type="GO" id="GO:0030337">
    <property type="term" value="F:DNA polymerase processivity factor activity"/>
    <property type="evidence" value="ECO:0007669"/>
    <property type="project" value="InterPro"/>
</dbReference>
<dbReference type="GO" id="GO:0006272">
    <property type="term" value="P:leading strand elongation"/>
    <property type="evidence" value="ECO:0007669"/>
    <property type="project" value="TreeGrafter"/>
</dbReference>
<dbReference type="GO" id="GO:0006275">
    <property type="term" value="P:regulation of DNA replication"/>
    <property type="evidence" value="ECO:0007669"/>
    <property type="project" value="InterPro"/>
</dbReference>
<dbReference type="CDD" id="cd00577">
    <property type="entry name" value="PCNA"/>
    <property type="match status" value="1"/>
</dbReference>
<dbReference type="Gene3D" id="3.70.10.10">
    <property type="match status" value="1"/>
</dbReference>
<dbReference type="InterPro" id="IPR046938">
    <property type="entry name" value="DNA_clamp_sf"/>
</dbReference>
<dbReference type="InterPro" id="IPR000730">
    <property type="entry name" value="Pr_cel_nuc_antig"/>
</dbReference>
<dbReference type="InterPro" id="IPR022649">
    <property type="entry name" value="Pr_cel_nuc_antig_C"/>
</dbReference>
<dbReference type="InterPro" id="IPR022659">
    <property type="entry name" value="Pr_cel_nuc_antig_CS"/>
</dbReference>
<dbReference type="InterPro" id="IPR022648">
    <property type="entry name" value="Pr_cel_nuc_antig_N"/>
</dbReference>
<dbReference type="NCBIfam" id="TIGR00590">
    <property type="entry name" value="pcna"/>
    <property type="match status" value="1"/>
</dbReference>
<dbReference type="PANTHER" id="PTHR11352">
    <property type="entry name" value="PROLIFERATING CELL NUCLEAR ANTIGEN"/>
    <property type="match status" value="1"/>
</dbReference>
<dbReference type="PANTHER" id="PTHR11352:SF0">
    <property type="entry name" value="PROLIFERATING CELL NUCLEAR ANTIGEN"/>
    <property type="match status" value="1"/>
</dbReference>
<dbReference type="Pfam" id="PF02747">
    <property type="entry name" value="PCNA_C"/>
    <property type="match status" value="1"/>
</dbReference>
<dbReference type="Pfam" id="PF00705">
    <property type="entry name" value="PCNA_N"/>
    <property type="match status" value="1"/>
</dbReference>
<dbReference type="PRINTS" id="PR00339">
    <property type="entry name" value="PCNACYCLIN"/>
</dbReference>
<dbReference type="SUPFAM" id="SSF55979">
    <property type="entry name" value="DNA clamp"/>
    <property type="match status" value="2"/>
</dbReference>
<dbReference type="PROSITE" id="PS01251">
    <property type="entry name" value="PCNA_1"/>
    <property type="match status" value="1"/>
</dbReference>
<dbReference type="PROSITE" id="PS00293">
    <property type="entry name" value="PCNA_2"/>
    <property type="match status" value="1"/>
</dbReference>
<keyword id="KW-0235">DNA replication</keyword>
<keyword id="KW-0238">DNA-binding</keyword>
<keyword id="KW-0244">Early protein</keyword>
<keyword id="KW-1185">Reference proteome</keyword>
<comment type="function">
    <text evidence="1">Sliding clamp subunit. Responsible for tethering the catalytic subunit of DNA polymerase to DNA during high-speed replication (By similarity).</text>
</comment>
<comment type="similarity">
    <text evidence="3">Belongs to the PCNA family.</text>
</comment>
<organismHost>
    <name type="scientific">Orgyia pseudotsugata</name>
    <name type="common">Douglas-fir tussock moth</name>
    <dbReference type="NCBI Taxonomy" id="33414"/>
</organismHost>
<reference key="1">
    <citation type="journal article" date="1997" name="Virology">
        <title>The sequence of the Orgyia pseudotsugata multinucleocapsid nuclear polyhedrosis virus genome.</title>
        <authorList>
            <person name="Ahrens C.H."/>
            <person name="Russell R.R."/>
            <person name="Funk C.J."/>
            <person name="Evans J."/>
            <person name="Harwood S."/>
            <person name="Rohrmann G.F."/>
        </authorList>
    </citation>
    <scope>NUCLEOTIDE SEQUENCE [LARGE SCALE GENOMIC DNA]</scope>
</reference>
<gene>
    <name type="primary">PCNA</name>
    <name type="ORF">ORF53</name>
</gene>
<proteinExistence type="inferred from homology"/>
<evidence type="ECO:0000250" key="1"/>
<evidence type="ECO:0000255" key="2"/>
<evidence type="ECO:0000305" key="3"/>
<sequence>MEATFATAAAFQSIVGALRGLLTHATFDCDAHGMRLHSLDVERVALADLRLRRAGFARYACERKLSFSVPVRGLVKIVRTADPSAPLTMRVAARDDRVRLAYETARRAVSCTLAQISLDADRLGVPDKEYTCVLAVPSAELTRACADLARLGATTVEMSSGTTGLSFAAHADDGVRVRVLLRGSPQRPLTQAFACCYLNKLARASALSETVDVCMDASMPLRLRFRLGPLGALDLYLAPRVPSVGESAQ</sequence>
<name>PCNA_NPVOP</name>
<protein>
    <recommendedName>
        <fullName>Probable DNA polymerase sliding clamp</fullName>
    </recommendedName>
    <alternativeName>
        <fullName>Proliferating cell nuclear antigen homolog</fullName>
        <shortName>PCNA</shortName>
    </alternativeName>
</protein>
<accession>O10308</accession>